<name>HPRK_STRMU</name>
<organism>
    <name type="scientific">Streptococcus mutans serotype c (strain ATCC 700610 / UA159)</name>
    <dbReference type="NCBI Taxonomy" id="210007"/>
    <lineage>
        <taxon>Bacteria</taxon>
        <taxon>Bacillati</taxon>
        <taxon>Bacillota</taxon>
        <taxon>Bacilli</taxon>
        <taxon>Lactobacillales</taxon>
        <taxon>Streptococcaceae</taxon>
        <taxon>Streptococcus</taxon>
    </lineage>
</organism>
<comment type="function">
    <text evidence="1">Catalyzes the ATP- as well as the pyrophosphate-dependent phosphorylation of a specific serine residue in HPr, a phosphocarrier protein of the phosphoenolpyruvate-dependent sugar phosphotransferase system (PTS). HprK/P also catalyzes the pyrophosphate-producing, inorganic phosphate-dependent dephosphorylation (phosphorolysis) of seryl-phosphorylated HPr (P-Ser-HPr). The two antagonistic activities of HprK/P are regulated by several intracellular metabolites, which change their concentration in response to the absence or presence of rapidly metabolisable carbon sources (glucose, fructose, etc.) in the growth medium. Therefore, by controlling the phosphorylation state of HPr, HPrK/P is a sensor enzyme that plays a major role in the regulation of carbon metabolism and sugar transport: it mediates carbon catabolite repression (CCR), and regulates PTS-catalyzed carbohydrate uptake and inducer exclusion (By similarity).</text>
</comment>
<comment type="catalytic activity">
    <reaction>
        <text>[HPr protein]-L-serine + ATP = [HPr protein]-O-phospho-L-serine + ADP + H(+)</text>
        <dbReference type="Rhea" id="RHEA:46600"/>
        <dbReference type="Rhea" id="RHEA-COMP:11602"/>
        <dbReference type="Rhea" id="RHEA-COMP:11603"/>
        <dbReference type="ChEBI" id="CHEBI:15378"/>
        <dbReference type="ChEBI" id="CHEBI:29999"/>
        <dbReference type="ChEBI" id="CHEBI:30616"/>
        <dbReference type="ChEBI" id="CHEBI:83421"/>
        <dbReference type="ChEBI" id="CHEBI:456216"/>
    </reaction>
</comment>
<comment type="catalytic activity">
    <reaction>
        <text>[HPr protein]-O-phospho-L-serine + phosphate + H(+) = [HPr protein]-L-serine + diphosphate</text>
        <dbReference type="Rhea" id="RHEA:46604"/>
        <dbReference type="Rhea" id="RHEA-COMP:11602"/>
        <dbReference type="Rhea" id="RHEA-COMP:11603"/>
        <dbReference type="ChEBI" id="CHEBI:15378"/>
        <dbReference type="ChEBI" id="CHEBI:29999"/>
        <dbReference type="ChEBI" id="CHEBI:33019"/>
        <dbReference type="ChEBI" id="CHEBI:43474"/>
        <dbReference type="ChEBI" id="CHEBI:83421"/>
    </reaction>
</comment>
<comment type="cofactor">
    <cofactor evidence="1">
        <name>Mg(2+)</name>
        <dbReference type="ChEBI" id="CHEBI:18420"/>
    </cofactor>
</comment>
<comment type="subunit">
    <text evidence="1">Homohexamer.</text>
</comment>
<comment type="domain">
    <text evidence="1">The Walker A ATP-binding motif also binds Pi and PPi.</text>
</comment>
<comment type="miscellaneous">
    <text evidence="1">Both phosphorylation and phosphorolysis are carried out by the same active site and suggest a common mechanism for both reactions.</text>
</comment>
<comment type="similarity">
    <text evidence="3">Belongs to the HPrK/P family.</text>
</comment>
<evidence type="ECO:0000250" key="1"/>
<evidence type="ECO:0000255" key="2"/>
<evidence type="ECO:0000305" key="3"/>
<feature type="chain" id="PRO_0000058995" description="HPr kinase/phosphorylase">
    <location>
        <begin position="1"/>
        <end position="311"/>
    </location>
</feature>
<feature type="region of interest" description="Important for the catalytic mechanism of both phosphorylation and dephosphorylation" evidence="1">
    <location>
        <begin position="201"/>
        <end position="210"/>
    </location>
</feature>
<feature type="region of interest" description="Important for the catalytic mechanism of dephosphorylation" evidence="1">
    <location>
        <begin position="264"/>
        <end position="269"/>
    </location>
</feature>
<feature type="active site" evidence="1">
    <location>
        <position position="138"/>
    </location>
</feature>
<feature type="active site" evidence="1">
    <location>
        <position position="159"/>
    </location>
</feature>
<feature type="active site" description="Proton acceptor; for phosphorylation activity. Proton donor; for dephosphorylation activity" evidence="1">
    <location>
        <position position="177"/>
    </location>
</feature>
<feature type="active site" evidence="1">
    <location>
        <position position="243"/>
    </location>
</feature>
<feature type="binding site" evidence="1">
    <location>
        <begin position="153"/>
        <end position="160"/>
    </location>
    <ligand>
        <name>ATP</name>
        <dbReference type="ChEBI" id="CHEBI:30616"/>
    </ligand>
</feature>
<feature type="binding site" evidence="2">
    <location>
        <position position="160"/>
    </location>
    <ligand>
        <name>Mg(2+)</name>
        <dbReference type="ChEBI" id="CHEBI:18420"/>
    </ligand>
</feature>
<feature type="binding site" evidence="2">
    <location>
        <position position="202"/>
    </location>
    <ligand>
        <name>Mg(2+)</name>
        <dbReference type="ChEBI" id="CHEBI:18420"/>
    </ligand>
</feature>
<keyword id="KW-0067">ATP-binding</keyword>
<keyword id="KW-0119">Carbohydrate metabolism</keyword>
<keyword id="KW-0418">Kinase</keyword>
<keyword id="KW-0460">Magnesium</keyword>
<keyword id="KW-0479">Metal-binding</keyword>
<keyword id="KW-0511">Multifunctional enzyme</keyword>
<keyword id="KW-0547">Nucleotide-binding</keyword>
<keyword id="KW-1185">Reference proteome</keyword>
<keyword id="KW-0723">Serine/threonine-protein kinase</keyword>
<keyword id="KW-0808">Transferase</keyword>
<reference key="1">
    <citation type="submission" date="1999-03" db="EMBL/GenBank/DDBJ databases">
        <title>Nucleotide sequence of the Streptococcus mutans ptsK and lgt genes.</title>
        <authorList>
            <person name="Meloni M."/>
            <person name="Piggot P.J."/>
            <person name="Daneo-Moore L."/>
        </authorList>
    </citation>
    <scope>NUCLEOTIDE SEQUENCE [GENOMIC DNA]</scope>
    <source>
        <strain>GS-5 / Kuramitsu</strain>
    </source>
</reference>
<reference key="2">
    <citation type="journal article" date="2002" name="Proc. Natl. Acad. Sci. U.S.A.">
        <title>Genome sequence of Streptococcus mutans UA159, a cariogenic dental pathogen.</title>
        <authorList>
            <person name="Ajdic D.J."/>
            <person name="McShan W.M."/>
            <person name="McLaughlin R.E."/>
            <person name="Savic G."/>
            <person name="Chang J."/>
            <person name="Carson M.B."/>
            <person name="Primeaux C."/>
            <person name="Tian R."/>
            <person name="Kenton S."/>
            <person name="Jia H.G."/>
            <person name="Lin S.P."/>
            <person name="Qian Y."/>
            <person name="Li S."/>
            <person name="Zhu H."/>
            <person name="Najar F.Z."/>
            <person name="Lai H."/>
            <person name="White J."/>
            <person name="Roe B.A."/>
            <person name="Ferretti J.J."/>
        </authorList>
    </citation>
    <scope>NUCLEOTIDE SEQUENCE [LARGE SCALE GENOMIC DNA]</scope>
    <source>
        <strain>ATCC 700610 / UA159</strain>
    </source>
</reference>
<gene>
    <name type="primary">hprK</name>
    <name type="ordered locus">SMU_754</name>
</gene>
<protein>
    <recommendedName>
        <fullName>HPr kinase/phosphorylase</fullName>
        <shortName>HPrK/P</shortName>
        <ecNumber>2.7.11.-</ecNumber>
        <ecNumber>2.7.4.-</ecNumber>
    </recommendedName>
    <alternativeName>
        <fullName>HPr(Ser) kinase/phosphorylase</fullName>
    </alternativeName>
</protein>
<accession>Q9ZA56</accession>
<proteinExistence type="inferred from homology"/>
<sequence>MSVTVQMLVDKVKLDVIYGTQELLQKEIATADISRPGLEMTGYFDYYAPERIQLLGMKEWSYLTQMTSHNRYSVLKEMFQTETPAIIVARDLTIPEEMLLAAKEEGIAVLQSHVPTSRLSGEMSWYLDSCLAERTSVHGVLMDIYGMGVLIQGDSGIGKSETGLELVKRGHRLVADDRVDVFAKDEETLWGEPAEILRHLLEIRGVGIINVMSLYGASAVKDSSQVQLSIFLENFEKDKMFDRLGNGNEDIELSGVKIPRIRIPVKTGRNVSVVIEAAAMNYRAKQMGYDATETFEKRLTNLIDQNEASHD</sequence>
<dbReference type="EC" id="2.7.11.-"/>
<dbReference type="EC" id="2.7.4.-"/>
<dbReference type="EMBL" id="U75480">
    <property type="protein sequence ID" value="AAC80172.1"/>
    <property type="molecule type" value="Genomic_DNA"/>
</dbReference>
<dbReference type="EMBL" id="AE014133">
    <property type="protein sequence ID" value="AAN58477.1"/>
    <property type="molecule type" value="Genomic_DNA"/>
</dbReference>
<dbReference type="PIR" id="T11568">
    <property type="entry name" value="T11568"/>
</dbReference>
<dbReference type="RefSeq" id="NP_721171.1">
    <property type="nucleotide sequence ID" value="NC_004350.2"/>
</dbReference>
<dbReference type="RefSeq" id="WP_002263627.1">
    <property type="nucleotide sequence ID" value="NC_004350.2"/>
</dbReference>
<dbReference type="SMR" id="Q9ZA56"/>
<dbReference type="STRING" id="210007.SMU_754"/>
<dbReference type="GeneID" id="93859704"/>
<dbReference type="KEGG" id="smu:SMU_754"/>
<dbReference type="PATRIC" id="fig|210007.7.peg.667"/>
<dbReference type="eggNOG" id="COG1493">
    <property type="taxonomic scope" value="Bacteria"/>
</dbReference>
<dbReference type="HOGENOM" id="CLU_052030_0_1_9"/>
<dbReference type="OrthoDB" id="9778803at2"/>
<dbReference type="PhylomeDB" id="Q9ZA56"/>
<dbReference type="Proteomes" id="UP000002512">
    <property type="component" value="Chromosome"/>
</dbReference>
<dbReference type="GO" id="GO:0005524">
    <property type="term" value="F:ATP binding"/>
    <property type="evidence" value="ECO:0007669"/>
    <property type="project" value="UniProtKB-UniRule"/>
</dbReference>
<dbReference type="GO" id="GO:0000287">
    <property type="term" value="F:magnesium ion binding"/>
    <property type="evidence" value="ECO:0007669"/>
    <property type="project" value="UniProtKB-UniRule"/>
</dbReference>
<dbReference type="GO" id="GO:0000155">
    <property type="term" value="F:phosphorelay sensor kinase activity"/>
    <property type="evidence" value="ECO:0007669"/>
    <property type="project" value="InterPro"/>
</dbReference>
<dbReference type="GO" id="GO:0004674">
    <property type="term" value="F:protein serine/threonine kinase activity"/>
    <property type="evidence" value="ECO:0007669"/>
    <property type="project" value="UniProtKB-KW"/>
</dbReference>
<dbReference type="GO" id="GO:0004712">
    <property type="term" value="F:protein serine/threonine/tyrosine kinase activity"/>
    <property type="evidence" value="ECO:0007669"/>
    <property type="project" value="UniProtKB-UniRule"/>
</dbReference>
<dbReference type="GO" id="GO:0006109">
    <property type="term" value="P:regulation of carbohydrate metabolic process"/>
    <property type="evidence" value="ECO:0007669"/>
    <property type="project" value="UniProtKB-UniRule"/>
</dbReference>
<dbReference type="CDD" id="cd01918">
    <property type="entry name" value="HprK_C"/>
    <property type="match status" value="1"/>
</dbReference>
<dbReference type="FunFam" id="3.40.50.300:FF:000174">
    <property type="entry name" value="HPr kinase/phosphorylase"/>
    <property type="match status" value="1"/>
</dbReference>
<dbReference type="Gene3D" id="3.40.1390.20">
    <property type="entry name" value="HprK N-terminal domain-like"/>
    <property type="match status" value="1"/>
</dbReference>
<dbReference type="Gene3D" id="3.40.50.300">
    <property type="entry name" value="P-loop containing nucleotide triphosphate hydrolases"/>
    <property type="match status" value="1"/>
</dbReference>
<dbReference type="HAMAP" id="MF_01249">
    <property type="entry name" value="HPr_kinase"/>
    <property type="match status" value="1"/>
</dbReference>
<dbReference type="InterPro" id="IPR003755">
    <property type="entry name" value="HPr(Ser)_kin/Pase"/>
</dbReference>
<dbReference type="InterPro" id="IPR011104">
    <property type="entry name" value="Hpr_kin/Pase_C"/>
</dbReference>
<dbReference type="InterPro" id="IPR011126">
    <property type="entry name" value="Hpr_kin/Pase_Hpr_N"/>
</dbReference>
<dbReference type="InterPro" id="IPR027417">
    <property type="entry name" value="P-loop_NTPase"/>
</dbReference>
<dbReference type="InterPro" id="IPR028979">
    <property type="entry name" value="Ser_kin/Pase_Hpr-like_N_sf"/>
</dbReference>
<dbReference type="NCBIfam" id="TIGR00679">
    <property type="entry name" value="hpr-ser"/>
    <property type="match status" value="1"/>
</dbReference>
<dbReference type="PANTHER" id="PTHR30305:SF1">
    <property type="entry name" value="HPR KINASE_PHOSPHORYLASE"/>
    <property type="match status" value="1"/>
</dbReference>
<dbReference type="PANTHER" id="PTHR30305">
    <property type="entry name" value="PROTEIN YJDM-RELATED"/>
    <property type="match status" value="1"/>
</dbReference>
<dbReference type="Pfam" id="PF07475">
    <property type="entry name" value="Hpr_kinase_C"/>
    <property type="match status" value="1"/>
</dbReference>
<dbReference type="Pfam" id="PF02603">
    <property type="entry name" value="Hpr_kinase_N"/>
    <property type="match status" value="1"/>
</dbReference>
<dbReference type="SUPFAM" id="SSF75138">
    <property type="entry name" value="HprK N-terminal domain-like"/>
    <property type="match status" value="1"/>
</dbReference>
<dbReference type="SUPFAM" id="SSF53795">
    <property type="entry name" value="PEP carboxykinase-like"/>
    <property type="match status" value="1"/>
</dbReference>